<feature type="chain" id="PRO_0000391583" description="CASP-like protein 4D1">
    <location>
        <begin position="1"/>
        <end position="168"/>
    </location>
</feature>
<feature type="topological domain" description="Cytoplasmic" evidence="2">
    <location>
        <begin position="1"/>
        <end position="11"/>
    </location>
</feature>
<feature type="transmembrane region" description="Helical" evidence="2">
    <location>
        <begin position="12"/>
        <end position="32"/>
    </location>
</feature>
<feature type="topological domain" description="Extracellular" evidence="2">
    <location>
        <begin position="33"/>
        <end position="57"/>
    </location>
</feature>
<feature type="transmembrane region" description="Helical" evidence="2">
    <location>
        <begin position="58"/>
        <end position="78"/>
    </location>
</feature>
<feature type="topological domain" description="Cytoplasmic" evidence="2">
    <location>
        <begin position="79"/>
        <end position="97"/>
    </location>
</feature>
<feature type="transmembrane region" description="Helical" evidence="2">
    <location>
        <begin position="98"/>
        <end position="118"/>
    </location>
</feature>
<feature type="topological domain" description="Extracellular" evidence="2">
    <location>
        <begin position="119"/>
        <end position="144"/>
    </location>
</feature>
<feature type="transmembrane region" description="Helical" evidence="2">
    <location>
        <begin position="145"/>
        <end position="165"/>
    </location>
</feature>
<feature type="topological domain" description="Cytoplasmic" evidence="2">
    <location>
        <begin position="166"/>
        <end position="168"/>
    </location>
</feature>
<protein>
    <recommendedName>
        <fullName>CASP-like protein 4D1</fullName>
        <shortName>RcCASPL4D1</shortName>
    </recommendedName>
</protein>
<proteinExistence type="inferred from homology"/>
<evidence type="ECO:0000250" key="1"/>
<evidence type="ECO:0000255" key="2"/>
<evidence type="ECO:0000305" key="3"/>
<organism>
    <name type="scientific">Ricinus communis</name>
    <name type="common">Castor bean</name>
    <dbReference type="NCBI Taxonomy" id="3988"/>
    <lineage>
        <taxon>Eukaryota</taxon>
        <taxon>Viridiplantae</taxon>
        <taxon>Streptophyta</taxon>
        <taxon>Embryophyta</taxon>
        <taxon>Tracheophyta</taxon>
        <taxon>Spermatophyta</taxon>
        <taxon>Magnoliopsida</taxon>
        <taxon>eudicotyledons</taxon>
        <taxon>Gunneridae</taxon>
        <taxon>Pentapetalae</taxon>
        <taxon>rosids</taxon>
        <taxon>fabids</taxon>
        <taxon>Malpighiales</taxon>
        <taxon>Euphorbiaceae</taxon>
        <taxon>Acalyphoideae</taxon>
        <taxon>Acalypheae</taxon>
        <taxon>Ricinus</taxon>
    </lineage>
</organism>
<comment type="subunit">
    <text evidence="1">Homodimer and heterodimers.</text>
</comment>
<comment type="subcellular location">
    <subcellularLocation>
        <location evidence="1">Cell membrane</location>
        <topology evidence="1">Multi-pass membrane protein</topology>
    </subcellularLocation>
</comment>
<comment type="similarity">
    <text evidence="3">Belongs to the Casparian strip membrane proteins (CASP) family.</text>
</comment>
<dbReference type="EMBL" id="EQ974236">
    <property type="protein sequence ID" value="EEF31519.1"/>
    <property type="molecule type" value="Genomic_DNA"/>
</dbReference>
<dbReference type="SMR" id="B9SXY8"/>
<dbReference type="FunCoup" id="B9SXY8">
    <property type="interactions" value="197"/>
</dbReference>
<dbReference type="STRING" id="3988.B9SXY8"/>
<dbReference type="KEGG" id="rcu:8267759"/>
<dbReference type="eggNOG" id="ENOG502S98H">
    <property type="taxonomic scope" value="Eukaryota"/>
</dbReference>
<dbReference type="InParanoid" id="B9SXY8"/>
<dbReference type="OMA" id="IGNAYSL"/>
<dbReference type="OrthoDB" id="685197at2759"/>
<dbReference type="Proteomes" id="UP000008311">
    <property type="component" value="Unassembled WGS sequence"/>
</dbReference>
<dbReference type="GO" id="GO:0005886">
    <property type="term" value="C:plasma membrane"/>
    <property type="evidence" value="ECO:0007669"/>
    <property type="project" value="UniProtKB-SubCell"/>
</dbReference>
<dbReference type="InterPro" id="IPR006702">
    <property type="entry name" value="CASP_dom"/>
</dbReference>
<dbReference type="PANTHER" id="PTHR33573">
    <property type="entry name" value="CASP-LIKE PROTEIN 4A4"/>
    <property type="match status" value="1"/>
</dbReference>
<dbReference type="PANTHER" id="PTHR33573:SF40">
    <property type="entry name" value="CASP-LIKE PROTEIN 4D2"/>
    <property type="match status" value="1"/>
</dbReference>
<dbReference type="Pfam" id="PF04535">
    <property type="entry name" value="CASP_dom"/>
    <property type="match status" value="1"/>
</dbReference>
<sequence>MAPPPPSLASRMAALILRILTFIFLIASLVILTTNTATLELDLVEVKVHFKDVYAYRYMLATIVIGLAYTVLQIAFTLYYVATGNRMMSGDGNLAFDFFGDKVISYILVTGAAAGFASTKDIKPVFSGSGDFDAFINKGYASASLLLIGFVCTAVLSVFSSYALPKQV</sequence>
<accession>B9SXY8</accession>
<name>CSPLE_RICCO</name>
<gene>
    <name type="ORF">RCOM_1206790</name>
</gene>
<reference key="1">
    <citation type="journal article" date="2010" name="Nat. Biotechnol.">
        <title>Draft genome sequence of the oilseed species Ricinus communis.</title>
        <authorList>
            <person name="Chan A.P."/>
            <person name="Crabtree J."/>
            <person name="Zhao Q."/>
            <person name="Lorenzi H."/>
            <person name="Orvis J."/>
            <person name="Puiu D."/>
            <person name="Melake-Berhan A."/>
            <person name="Jones K.M."/>
            <person name="Redman J."/>
            <person name="Chen G."/>
            <person name="Cahoon E.B."/>
            <person name="Gedil M."/>
            <person name="Stanke M."/>
            <person name="Haas B.J."/>
            <person name="Wortman J.R."/>
            <person name="Fraser-Liggett C.M."/>
            <person name="Ravel J."/>
            <person name="Rabinowicz P.D."/>
        </authorList>
    </citation>
    <scope>NUCLEOTIDE SEQUENCE [LARGE SCALE GENOMIC DNA]</scope>
    <source>
        <strain>cv. Hale</strain>
    </source>
</reference>
<reference key="2">
    <citation type="journal article" date="2014" name="Plant Physiol.">
        <title>Functional and evolutionary analysis of the CASPARIAN STRIP MEMBRANE DOMAIN PROTEIN family.</title>
        <authorList>
            <person name="Roppolo D."/>
            <person name="Boeckmann B."/>
            <person name="Pfister A."/>
            <person name="Boutet E."/>
            <person name="Rubio M.C."/>
            <person name="Denervaud-Tendon V."/>
            <person name="Vermeer J.E."/>
            <person name="Gheyselinck J."/>
            <person name="Xenarios I."/>
            <person name="Geldner N."/>
        </authorList>
    </citation>
    <scope>GENE FAMILY</scope>
    <scope>NOMENCLATURE</scope>
</reference>
<keyword id="KW-1003">Cell membrane</keyword>
<keyword id="KW-0472">Membrane</keyword>
<keyword id="KW-1185">Reference proteome</keyword>
<keyword id="KW-0812">Transmembrane</keyword>
<keyword id="KW-1133">Transmembrane helix</keyword>